<protein>
    <recommendedName>
        <fullName>Glutamyl-tRNA(Gln) amidotransferase subunit C-2, mitochondrial</fullName>
        <shortName evidence="1">Glu-AdT subunit C-2</shortName>
        <ecNumber evidence="1">6.3.5.-</ecNumber>
    </recommendedName>
</protein>
<evidence type="ECO:0000255" key="1">
    <source>
        <dbReference type="HAMAP-Rule" id="MF_03149"/>
    </source>
</evidence>
<keyword id="KW-0067">ATP-binding</keyword>
<keyword id="KW-0436">Ligase</keyword>
<keyword id="KW-0496">Mitochondrion</keyword>
<keyword id="KW-0547">Nucleotide-binding</keyword>
<keyword id="KW-0648">Protein biosynthesis</keyword>
<keyword id="KW-1185">Reference proteome</keyword>
<feature type="chain" id="PRO_0000413298" description="Glutamyl-tRNA(Gln) amidotransferase subunit C-2, mitochondrial">
    <location>
        <begin position="1"/>
        <end position="166"/>
    </location>
</feature>
<gene>
    <name type="ORF">CPIJ000405</name>
</gene>
<organism>
    <name type="scientific">Culex quinquefasciatus</name>
    <name type="common">Southern house mosquito</name>
    <name type="synonym">Culex pungens</name>
    <dbReference type="NCBI Taxonomy" id="7176"/>
    <lineage>
        <taxon>Eukaryota</taxon>
        <taxon>Metazoa</taxon>
        <taxon>Ecdysozoa</taxon>
        <taxon>Arthropoda</taxon>
        <taxon>Hexapoda</taxon>
        <taxon>Insecta</taxon>
        <taxon>Pterygota</taxon>
        <taxon>Neoptera</taxon>
        <taxon>Endopterygota</taxon>
        <taxon>Diptera</taxon>
        <taxon>Nematocera</taxon>
        <taxon>Culicoidea</taxon>
        <taxon>Culicidae</taxon>
        <taxon>Culicinae</taxon>
        <taxon>Culicini</taxon>
        <taxon>Culex</taxon>
        <taxon>Culex</taxon>
    </lineage>
</organism>
<sequence length="166" mass="19037">MIQSCRKLFRSDRCPNLHRKKPAYLEAGQRGFPEKSTRQKINYHELKHLSKVPQRPHKPTIDGQSTPTRIPVDAQTVRLSLVDLDSAEAHRTLEDAIEFASQILSVDTDGVEPLYTVLERDRLTLREDRVSDGNIQQDVLRNARVTEEEYFVAPPGNIPLEQEPKK</sequence>
<proteinExistence type="inferred from homology"/>
<comment type="function">
    <text evidence="1">Allows the formation of correctly charged Gln-tRNA(Gln) through the transamidation of misacylated Glu-tRNA(Gln) in the mitochondria. The reaction takes place in the presence of glutamine and ATP through an activated gamma-phospho-Glu-tRNA(Gln).</text>
</comment>
<comment type="catalytic activity">
    <reaction evidence="1">
        <text>L-glutamyl-tRNA(Gln) + L-glutamine + ATP + H2O = L-glutaminyl-tRNA(Gln) + L-glutamate + ADP + phosphate + H(+)</text>
        <dbReference type="Rhea" id="RHEA:17521"/>
        <dbReference type="Rhea" id="RHEA-COMP:9681"/>
        <dbReference type="Rhea" id="RHEA-COMP:9684"/>
        <dbReference type="ChEBI" id="CHEBI:15377"/>
        <dbReference type="ChEBI" id="CHEBI:15378"/>
        <dbReference type="ChEBI" id="CHEBI:29985"/>
        <dbReference type="ChEBI" id="CHEBI:30616"/>
        <dbReference type="ChEBI" id="CHEBI:43474"/>
        <dbReference type="ChEBI" id="CHEBI:58359"/>
        <dbReference type="ChEBI" id="CHEBI:78520"/>
        <dbReference type="ChEBI" id="CHEBI:78521"/>
        <dbReference type="ChEBI" id="CHEBI:456216"/>
    </reaction>
</comment>
<comment type="subunit">
    <text evidence="1">Subunit of the heterotrimeric GatCAB amidotransferase (AdT) complex, composed of A, B and C subunits.</text>
</comment>
<comment type="subcellular location">
    <subcellularLocation>
        <location evidence="1">Mitochondrion</location>
    </subcellularLocation>
</comment>
<comment type="miscellaneous">
    <text evidence="1">This protein may be expected to contain an N-terminal transit peptide but none has been predicted.</text>
</comment>
<comment type="similarity">
    <text evidence="1">Belongs to the GatC family.</text>
</comment>
<reference key="1">
    <citation type="submission" date="2007-03" db="EMBL/GenBank/DDBJ databases">
        <title>Annotation of Culex pipiens quinquefasciatus.</title>
        <authorList>
            <consortium name="The Broad Institute Genome Sequencing Platform"/>
            <person name="Atkinson P.W."/>
            <person name="Hemingway J."/>
            <person name="Christensen B.M."/>
            <person name="Higgs S."/>
            <person name="Kodira C.D."/>
            <person name="Hannick L.I."/>
            <person name="Megy K."/>
            <person name="O'Leary S.B."/>
            <person name="Pearson M."/>
            <person name="Haas B.J."/>
            <person name="Mauceli E."/>
            <person name="Wortman J.R."/>
            <person name="Lee N.H."/>
            <person name="Guigo R."/>
            <person name="Stanke M."/>
            <person name="Alvarado L."/>
            <person name="Amedeo P."/>
            <person name="Antoine C.H."/>
            <person name="Arensburger P."/>
            <person name="Bidwell S.L."/>
            <person name="Crawford M."/>
            <person name="Camaro F."/>
            <person name="Devon K."/>
            <person name="Engels R."/>
            <person name="Hammond M."/>
            <person name="Howarth C."/>
            <person name="Koehrsen M."/>
            <person name="Lawson D."/>
            <person name="Montgomery P."/>
            <person name="Nene V."/>
            <person name="Nusbaum C."/>
            <person name="Puiu D."/>
            <person name="Romero-Severson J."/>
            <person name="Severson D.W."/>
            <person name="Shumway M."/>
            <person name="Sisk P."/>
            <person name="Stolte C."/>
            <person name="Zeng Q."/>
            <person name="Eisenstadt E."/>
            <person name="Fraser-Liggett C.M."/>
            <person name="Strausberg R."/>
            <person name="Galagan J."/>
            <person name="Birren B."/>
            <person name="Collins F.H."/>
        </authorList>
    </citation>
    <scope>NUCLEOTIDE SEQUENCE [LARGE SCALE GENOMIC DNA]</scope>
    <source>
        <strain>JHB</strain>
    </source>
</reference>
<dbReference type="EC" id="6.3.5.-" evidence="1"/>
<dbReference type="EMBL" id="DS231816">
    <property type="protein sequence ID" value="EDS37613.1"/>
    <property type="molecule type" value="Genomic_DNA"/>
</dbReference>
<dbReference type="RefSeq" id="XP_001842075.1">
    <property type="nucleotide sequence ID" value="XM_001842023.1"/>
</dbReference>
<dbReference type="SMR" id="B0W041"/>
<dbReference type="FunCoup" id="B0W041">
    <property type="interactions" value="1123"/>
</dbReference>
<dbReference type="STRING" id="7176.B0W041"/>
<dbReference type="EnsemblMetazoa" id="CPIJ000405-RA">
    <property type="protein sequence ID" value="CPIJ000405-PA"/>
    <property type="gene ID" value="CPIJ000405"/>
</dbReference>
<dbReference type="KEGG" id="cqu:CpipJ_CPIJ000405"/>
<dbReference type="VEuPathDB" id="VectorBase:CPIJ000405"/>
<dbReference type="VEuPathDB" id="VectorBase:CQUJHB009367"/>
<dbReference type="eggNOG" id="KOG4247">
    <property type="taxonomic scope" value="Eukaryota"/>
</dbReference>
<dbReference type="HOGENOM" id="CLU_105899_0_1_1"/>
<dbReference type="InParanoid" id="B0W041"/>
<dbReference type="OMA" id="GTANRNW"/>
<dbReference type="OrthoDB" id="5394539at2759"/>
<dbReference type="PhylomeDB" id="B0W041"/>
<dbReference type="Proteomes" id="UP000002320">
    <property type="component" value="Unassembled WGS sequence"/>
</dbReference>
<dbReference type="GO" id="GO:0030956">
    <property type="term" value="C:glutamyl-tRNA(Gln) amidotransferase complex"/>
    <property type="evidence" value="ECO:0007669"/>
    <property type="project" value="UniProtKB-UniRule"/>
</dbReference>
<dbReference type="GO" id="GO:0005739">
    <property type="term" value="C:mitochondrion"/>
    <property type="evidence" value="ECO:0007669"/>
    <property type="project" value="UniProtKB-SubCell"/>
</dbReference>
<dbReference type="GO" id="GO:0005524">
    <property type="term" value="F:ATP binding"/>
    <property type="evidence" value="ECO:0007669"/>
    <property type="project" value="UniProtKB-KW"/>
</dbReference>
<dbReference type="GO" id="GO:0050567">
    <property type="term" value="F:glutaminyl-tRNA synthase (glutamine-hydrolyzing) activity"/>
    <property type="evidence" value="ECO:0007669"/>
    <property type="project" value="UniProtKB-UniRule"/>
</dbReference>
<dbReference type="GO" id="GO:0070681">
    <property type="term" value="P:glutaminyl-tRNAGln biosynthesis via transamidation"/>
    <property type="evidence" value="ECO:0007669"/>
    <property type="project" value="UniProtKB-UniRule"/>
</dbReference>
<dbReference type="GO" id="GO:0032543">
    <property type="term" value="P:mitochondrial translation"/>
    <property type="evidence" value="ECO:0007669"/>
    <property type="project" value="UniProtKB-UniRule"/>
</dbReference>
<dbReference type="GO" id="GO:0006450">
    <property type="term" value="P:regulation of translational fidelity"/>
    <property type="evidence" value="ECO:0007669"/>
    <property type="project" value="InterPro"/>
</dbReference>
<dbReference type="HAMAP" id="MF_00122">
    <property type="entry name" value="GatC"/>
    <property type="match status" value="1"/>
</dbReference>
<dbReference type="InterPro" id="IPR036113">
    <property type="entry name" value="Asp/Glu-ADT_sf_sub_c"/>
</dbReference>
<dbReference type="InterPro" id="IPR003837">
    <property type="entry name" value="GatC"/>
</dbReference>
<dbReference type="PANTHER" id="PTHR15004">
    <property type="entry name" value="GLUTAMYL-TRNA(GLN) AMIDOTRANSFERASE SUBUNIT C, MITOCHONDRIAL"/>
    <property type="match status" value="1"/>
</dbReference>
<dbReference type="PANTHER" id="PTHR15004:SF0">
    <property type="entry name" value="GLUTAMYL-TRNA(GLN) AMIDOTRANSFERASE SUBUNIT C, MITOCHONDRIAL"/>
    <property type="match status" value="1"/>
</dbReference>
<dbReference type="Pfam" id="PF02686">
    <property type="entry name" value="GatC"/>
    <property type="match status" value="1"/>
</dbReference>
<dbReference type="SUPFAM" id="SSF141000">
    <property type="entry name" value="Glu-tRNAGln amidotransferase C subunit"/>
    <property type="match status" value="1"/>
</dbReference>
<name>GATC2_CULQU</name>
<accession>B0W041</accession>